<gene>
    <name evidence="1" type="primary">acpP</name>
    <name type="ordered locus">BMA10247_1799</name>
</gene>
<organism>
    <name type="scientific">Burkholderia mallei (strain NCTC 10247)</name>
    <dbReference type="NCBI Taxonomy" id="320389"/>
    <lineage>
        <taxon>Bacteria</taxon>
        <taxon>Pseudomonadati</taxon>
        <taxon>Pseudomonadota</taxon>
        <taxon>Betaproteobacteria</taxon>
        <taxon>Burkholderiales</taxon>
        <taxon>Burkholderiaceae</taxon>
        <taxon>Burkholderia</taxon>
        <taxon>pseudomallei group</taxon>
    </lineage>
</organism>
<sequence length="79" mass="8712">MDNIEQRVKKIVAEQLGVAEAEIKNEASFVNDLGADSLDTVELVMALEDEFGMEIPDEEAEKITTVQQAIDYARANVKA</sequence>
<keyword id="KW-0963">Cytoplasm</keyword>
<keyword id="KW-0275">Fatty acid biosynthesis</keyword>
<keyword id="KW-0276">Fatty acid metabolism</keyword>
<keyword id="KW-0444">Lipid biosynthesis</keyword>
<keyword id="KW-0443">Lipid metabolism</keyword>
<keyword id="KW-0596">Phosphopantetheine</keyword>
<keyword id="KW-0597">Phosphoprotein</keyword>
<accession>A3MM52</accession>
<protein>
    <recommendedName>
        <fullName evidence="1">Acyl carrier protein</fullName>
        <shortName evidence="1">ACP</shortName>
    </recommendedName>
</protein>
<dbReference type="EMBL" id="CP000548">
    <property type="protein sequence ID" value="ABO04356.1"/>
    <property type="molecule type" value="Genomic_DNA"/>
</dbReference>
<dbReference type="RefSeq" id="WP_004197638.1">
    <property type="nucleotide sequence ID" value="NZ_CP007802.1"/>
</dbReference>
<dbReference type="SMR" id="A3MM52"/>
<dbReference type="GeneID" id="98102461"/>
<dbReference type="KEGG" id="bmaz:BM44_1400"/>
<dbReference type="KEGG" id="bmn:BMA10247_1799"/>
<dbReference type="PATRIC" id="fig|320389.8.peg.1561"/>
<dbReference type="UniPathway" id="UPA00094"/>
<dbReference type="GO" id="GO:0005829">
    <property type="term" value="C:cytosol"/>
    <property type="evidence" value="ECO:0007669"/>
    <property type="project" value="TreeGrafter"/>
</dbReference>
<dbReference type="GO" id="GO:0016020">
    <property type="term" value="C:membrane"/>
    <property type="evidence" value="ECO:0007669"/>
    <property type="project" value="GOC"/>
</dbReference>
<dbReference type="GO" id="GO:0000035">
    <property type="term" value="F:acyl binding"/>
    <property type="evidence" value="ECO:0007669"/>
    <property type="project" value="TreeGrafter"/>
</dbReference>
<dbReference type="GO" id="GO:0000036">
    <property type="term" value="F:acyl carrier activity"/>
    <property type="evidence" value="ECO:0007669"/>
    <property type="project" value="UniProtKB-UniRule"/>
</dbReference>
<dbReference type="GO" id="GO:0009245">
    <property type="term" value="P:lipid A biosynthetic process"/>
    <property type="evidence" value="ECO:0007669"/>
    <property type="project" value="TreeGrafter"/>
</dbReference>
<dbReference type="FunFam" id="1.10.1200.10:FF:000001">
    <property type="entry name" value="Acyl carrier protein"/>
    <property type="match status" value="1"/>
</dbReference>
<dbReference type="Gene3D" id="1.10.1200.10">
    <property type="entry name" value="ACP-like"/>
    <property type="match status" value="1"/>
</dbReference>
<dbReference type="HAMAP" id="MF_01217">
    <property type="entry name" value="Acyl_carrier"/>
    <property type="match status" value="1"/>
</dbReference>
<dbReference type="InterPro" id="IPR003231">
    <property type="entry name" value="ACP"/>
</dbReference>
<dbReference type="InterPro" id="IPR036736">
    <property type="entry name" value="ACP-like_sf"/>
</dbReference>
<dbReference type="InterPro" id="IPR009081">
    <property type="entry name" value="PP-bd_ACP"/>
</dbReference>
<dbReference type="InterPro" id="IPR006162">
    <property type="entry name" value="Ppantetheine_attach_site"/>
</dbReference>
<dbReference type="NCBIfam" id="TIGR00517">
    <property type="entry name" value="acyl_carrier"/>
    <property type="match status" value="1"/>
</dbReference>
<dbReference type="NCBIfam" id="NF002148">
    <property type="entry name" value="PRK00982.1-2"/>
    <property type="match status" value="1"/>
</dbReference>
<dbReference type="NCBIfam" id="NF002149">
    <property type="entry name" value="PRK00982.1-3"/>
    <property type="match status" value="1"/>
</dbReference>
<dbReference type="NCBIfam" id="NF002150">
    <property type="entry name" value="PRK00982.1-4"/>
    <property type="match status" value="1"/>
</dbReference>
<dbReference type="NCBIfam" id="NF002151">
    <property type="entry name" value="PRK00982.1-5"/>
    <property type="match status" value="1"/>
</dbReference>
<dbReference type="PANTHER" id="PTHR20863">
    <property type="entry name" value="ACYL CARRIER PROTEIN"/>
    <property type="match status" value="1"/>
</dbReference>
<dbReference type="PANTHER" id="PTHR20863:SF76">
    <property type="entry name" value="CARRIER DOMAIN-CONTAINING PROTEIN"/>
    <property type="match status" value="1"/>
</dbReference>
<dbReference type="Pfam" id="PF00550">
    <property type="entry name" value="PP-binding"/>
    <property type="match status" value="1"/>
</dbReference>
<dbReference type="SUPFAM" id="SSF47336">
    <property type="entry name" value="ACP-like"/>
    <property type="match status" value="1"/>
</dbReference>
<dbReference type="PROSITE" id="PS50075">
    <property type="entry name" value="CARRIER"/>
    <property type="match status" value="1"/>
</dbReference>
<dbReference type="PROSITE" id="PS00012">
    <property type="entry name" value="PHOSPHOPANTETHEINE"/>
    <property type="match status" value="1"/>
</dbReference>
<feature type="chain" id="PRO_1000066571" description="Acyl carrier protein">
    <location>
        <begin position="1"/>
        <end position="79"/>
    </location>
</feature>
<feature type="domain" description="Carrier" evidence="2">
    <location>
        <begin position="2"/>
        <end position="77"/>
    </location>
</feature>
<feature type="modified residue" description="O-(pantetheine 4'-phosphoryl)serine" evidence="2">
    <location>
        <position position="37"/>
    </location>
</feature>
<reference key="1">
    <citation type="journal article" date="2010" name="Genome Biol. Evol.">
        <title>Continuing evolution of Burkholderia mallei through genome reduction and large-scale rearrangements.</title>
        <authorList>
            <person name="Losada L."/>
            <person name="Ronning C.M."/>
            <person name="DeShazer D."/>
            <person name="Woods D."/>
            <person name="Fedorova N."/>
            <person name="Kim H.S."/>
            <person name="Shabalina S.A."/>
            <person name="Pearson T.R."/>
            <person name="Brinkac L."/>
            <person name="Tan P."/>
            <person name="Nandi T."/>
            <person name="Crabtree J."/>
            <person name="Badger J."/>
            <person name="Beckstrom-Sternberg S."/>
            <person name="Saqib M."/>
            <person name="Schutzer S.E."/>
            <person name="Keim P."/>
            <person name="Nierman W.C."/>
        </authorList>
    </citation>
    <scope>NUCLEOTIDE SEQUENCE [LARGE SCALE GENOMIC DNA]</scope>
    <source>
        <strain>NCTC 10247</strain>
    </source>
</reference>
<proteinExistence type="inferred from homology"/>
<comment type="function">
    <text evidence="1">Carrier of the growing fatty acid chain in fatty acid biosynthesis.</text>
</comment>
<comment type="pathway">
    <text evidence="1">Lipid metabolism; fatty acid biosynthesis.</text>
</comment>
<comment type="subcellular location">
    <subcellularLocation>
        <location evidence="1">Cytoplasm</location>
    </subcellularLocation>
</comment>
<comment type="PTM">
    <text evidence="1">4'-phosphopantetheine is transferred from CoA to a specific serine of apo-ACP by AcpS. This modification is essential for activity because fatty acids are bound in thioester linkage to the sulfhydryl of the prosthetic group.</text>
</comment>
<comment type="similarity">
    <text evidence="1">Belongs to the acyl carrier protein (ACP) family.</text>
</comment>
<name>ACP_BURM7</name>
<evidence type="ECO:0000255" key="1">
    <source>
        <dbReference type="HAMAP-Rule" id="MF_01217"/>
    </source>
</evidence>
<evidence type="ECO:0000255" key="2">
    <source>
        <dbReference type="PROSITE-ProRule" id="PRU00258"/>
    </source>
</evidence>